<protein>
    <recommendedName>
        <fullName evidence="15">Cytochrome P450 monooxygenase easK</fullName>
        <ecNumber evidence="15">1.-.-.-</ecNumber>
    </recommendedName>
    <alternativeName>
        <fullName evidence="14">Ergot alkaloid synthesis protein K</fullName>
    </alternativeName>
</protein>
<evidence type="ECO:0000250" key="1">
    <source>
        <dbReference type="UniProtKB" id="B6D5I7"/>
    </source>
</evidence>
<evidence type="ECO:0000250" key="2">
    <source>
        <dbReference type="UniProtKB" id="P04798"/>
    </source>
</evidence>
<evidence type="ECO:0000255" key="3"/>
<evidence type="ECO:0000255" key="4">
    <source>
        <dbReference type="PROSITE-ProRule" id="PRU00498"/>
    </source>
</evidence>
<evidence type="ECO:0000269" key="5">
    <source>
    </source>
</evidence>
<evidence type="ECO:0000269" key="6">
    <source>
    </source>
</evidence>
<evidence type="ECO:0000269" key="7">
    <source>
    </source>
</evidence>
<evidence type="ECO:0000269" key="8">
    <source>
    </source>
</evidence>
<evidence type="ECO:0000269" key="9">
    <source>
    </source>
</evidence>
<evidence type="ECO:0000269" key="10">
    <source>
    </source>
</evidence>
<evidence type="ECO:0000269" key="11">
    <source>
    </source>
</evidence>
<evidence type="ECO:0000269" key="12">
    <source>
    </source>
</evidence>
<evidence type="ECO:0000269" key="13">
    <source>
    </source>
</evidence>
<evidence type="ECO:0000303" key="14">
    <source>
    </source>
</evidence>
<evidence type="ECO:0000305" key="15"/>
<evidence type="ECO:0000305" key="16">
    <source>
    </source>
</evidence>
<evidence type="ECO:0000305" key="17">
    <source>
    </source>
</evidence>
<accession>Q4WZ68</accession>
<dbReference type="EC" id="1.-.-.-" evidence="15"/>
<dbReference type="EMBL" id="AAHF01000001">
    <property type="protein sequence ID" value="EAL94097.1"/>
    <property type="molecule type" value="Genomic_DNA"/>
</dbReference>
<dbReference type="RefSeq" id="XP_756135.1">
    <property type="nucleotide sequence ID" value="XM_751042.1"/>
</dbReference>
<dbReference type="SMR" id="Q4WZ68"/>
<dbReference type="STRING" id="330879.Q4WZ68"/>
<dbReference type="GlyCosmos" id="Q4WZ68">
    <property type="glycosylation" value="2 sites, No reported glycans"/>
</dbReference>
<dbReference type="EnsemblFungi" id="EAL94097">
    <property type="protein sequence ID" value="EAL94097"/>
    <property type="gene ID" value="AFUA_2G17980"/>
</dbReference>
<dbReference type="GeneID" id="3512710"/>
<dbReference type="KEGG" id="afm:AFUA_2G17980"/>
<dbReference type="VEuPathDB" id="FungiDB:Afu2g17980"/>
<dbReference type="eggNOG" id="KOG0158">
    <property type="taxonomic scope" value="Eukaryota"/>
</dbReference>
<dbReference type="HOGENOM" id="CLU_001570_14_0_1"/>
<dbReference type="InParanoid" id="Q4WZ68"/>
<dbReference type="OMA" id="LSYPPKW"/>
<dbReference type="OrthoDB" id="4402279at2759"/>
<dbReference type="UniPathway" id="UPA00327"/>
<dbReference type="Proteomes" id="UP000002530">
    <property type="component" value="Chromosome 2"/>
</dbReference>
<dbReference type="GO" id="GO:0020037">
    <property type="term" value="F:heme binding"/>
    <property type="evidence" value="ECO:0007669"/>
    <property type="project" value="InterPro"/>
</dbReference>
<dbReference type="GO" id="GO:0005506">
    <property type="term" value="F:iron ion binding"/>
    <property type="evidence" value="ECO:0007669"/>
    <property type="project" value="InterPro"/>
</dbReference>
<dbReference type="GO" id="GO:0004497">
    <property type="term" value="F:monooxygenase activity"/>
    <property type="evidence" value="ECO:0007669"/>
    <property type="project" value="UniProtKB-KW"/>
</dbReference>
<dbReference type="GO" id="GO:0016705">
    <property type="term" value="F:oxidoreductase activity, acting on paired donors, with incorporation or reduction of molecular oxygen"/>
    <property type="evidence" value="ECO:0007669"/>
    <property type="project" value="InterPro"/>
</dbReference>
<dbReference type="GO" id="GO:0035837">
    <property type="term" value="P:ergot alkaloid biosynthetic process"/>
    <property type="evidence" value="ECO:0000317"/>
    <property type="project" value="AspGD"/>
</dbReference>
<dbReference type="GO" id="GO:0044283">
    <property type="term" value="P:small molecule biosynthetic process"/>
    <property type="evidence" value="ECO:0007669"/>
    <property type="project" value="UniProtKB-ARBA"/>
</dbReference>
<dbReference type="Gene3D" id="1.10.630.10">
    <property type="entry name" value="Cytochrome P450"/>
    <property type="match status" value="1"/>
</dbReference>
<dbReference type="InterPro" id="IPR001128">
    <property type="entry name" value="Cyt_P450"/>
</dbReference>
<dbReference type="InterPro" id="IPR002401">
    <property type="entry name" value="Cyt_P450_E_grp-I"/>
</dbReference>
<dbReference type="InterPro" id="IPR036396">
    <property type="entry name" value="Cyt_P450_sf"/>
</dbReference>
<dbReference type="InterPro" id="IPR050121">
    <property type="entry name" value="Cytochrome_P450_monoxygenase"/>
</dbReference>
<dbReference type="PANTHER" id="PTHR24305">
    <property type="entry name" value="CYTOCHROME P450"/>
    <property type="match status" value="1"/>
</dbReference>
<dbReference type="PANTHER" id="PTHR24305:SF235">
    <property type="entry name" value="CYTOCHROME P450 MONOOXYGENASE APDB-RELATED"/>
    <property type="match status" value="1"/>
</dbReference>
<dbReference type="Pfam" id="PF00067">
    <property type="entry name" value="p450"/>
    <property type="match status" value="1"/>
</dbReference>
<dbReference type="PRINTS" id="PR00463">
    <property type="entry name" value="EP450I"/>
</dbReference>
<dbReference type="PRINTS" id="PR00385">
    <property type="entry name" value="P450"/>
</dbReference>
<dbReference type="SUPFAM" id="SSF48264">
    <property type="entry name" value="Cytochrome P450"/>
    <property type="match status" value="1"/>
</dbReference>
<organism>
    <name type="scientific">Aspergillus fumigatus (strain ATCC MYA-4609 / CBS 101355 / FGSC A1100 / Af293)</name>
    <name type="common">Neosartorya fumigata</name>
    <dbReference type="NCBI Taxonomy" id="330879"/>
    <lineage>
        <taxon>Eukaryota</taxon>
        <taxon>Fungi</taxon>
        <taxon>Dikarya</taxon>
        <taxon>Ascomycota</taxon>
        <taxon>Pezizomycotina</taxon>
        <taxon>Eurotiomycetes</taxon>
        <taxon>Eurotiomycetidae</taxon>
        <taxon>Eurotiales</taxon>
        <taxon>Aspergillaceae</taxon>
        <taxon>Aspergillus</taxon>
        <taxon>Aspergillus subgen. Fumigati</taxon>
    </lineage>
</organism>
<comment type="function">
    <text evidence="1 5 6 8 9 10 11 12 13">Cytochrome P450 monooxygenase; part of the gene cluster that mediates the biosynthesis of fumiclavanine C, a fungal ergot alkaloid (PubMed:15933009, PubMed:22453123). DmaW catalyzes the first step of ergot alkaloid biosynthesis by condensing dimethylallyl diphosphate (DMAP) and tryptophan to form 4-dimethylallyl-L-tryptophan (PubMed:15870460). The second step is catalyzed by the methyltransferase easF that methylates 4-dimethylallyl-L-tryptophan in the presence of S-adenosyl-L-methionine, resulting in the formation of 4-dimethylallyl-L-abrine (By similarity). The catalase easC and the FAD-dependent oxidoreductase easE then transform 4-dimethylallyl-L-abrine to chanoclavine-I which is further oxidized by EasD in the presence of NAD(+), resulting in the formation of chanoclavine-I aldehyde (PubMed:20039019, PubMed:20526482, PubMed:21409592). EasA reduces chanoclavine-I aldehyde to dihydrochanoclavine-I aldehyde that spontaneously dehydrates to form 6,8-dimethyl-6,7-didehydroergoline (PubMed:20526482). EasG then catalyzes the reduction of 6,8-dimethyl-6,7-didehydroergoline to form festuclavine (PubMed:20526482). Hydrolysis of festuclavine by easM then leads to the formation of fumigaclavine B which is in turn acetylated by easN to fumigaclavine A (PubMed:26972831). Finally, easL catalyzes the conversion of fumigaclavine A into fumigaclavine C by attaching a dimethylallyl moiety to C-2 of the indole nucleus (PubMed:19672909). The role of the cytochrome P450 monooxygenase easK within the cluster has not been identified yet (PubMed:26972831).</text>
</comment>
<comment type="cofactor">
    <cofactor evidence="2">
        <name>heme</name>
        <dbReference type="ChEBI" id="CHEBI:30413"/>
    </cofactor>
</comment>
<comment type="pathway">
    <text evidence="17">Alkaloid biosynthesis; ergot alkaloid biosynthesis.</text>
</comment>
<comment type="induction">
    <text evidence="7">The expression of the ergot alkaloid synthesis cluster which leads to the synthesis of fumigaclavines is positively regulated by the brlA and stuA transcription factors (PubMed:19028996).</text>
</comment>
<comment type="biotechnology">
    <text evidence="16">Ergot alkaloids are known for their toxic effects on humans who consume contaminated grains or livestock that graze on grasses harboring ergot alkaloid-producing fungi (PubMed:19523108). Due to their strong affinity for monoamine neurotransmitter receptors they may also have clinical uses such as treatment of migraines, Parkinson's disease and cerebrovascular insufficiency (PubMed:19523108).</text>
</comment>
<comment type="similarity">
    <text evidence="15">Belongs to the cytochrome P450 family.</text>
</comment>
<name>EASK_ASPFU</name>
<reference key="1">
    <citation type="journal article" date="2005" name="Nature">
        <title>Genomic sequence of the pathogenic and allergenic filamentous fungus Aspergillus fumigatus.</title>
        <authorList>
            <person name="Nierman W.C."/>
            <person name="Pain A."/>
            <person name="Anderson M.J."/>
            <person name="Wortman J.R."/>
            <person name="Kim H.S."/>
            <person name="Arroyo J."/>
            <person name="Berriman M."/>
            <person name="Abe K."/>
            <person name="Archer D.B."/>
            <person name="Bermejo C."/>
            <person name="Bennett J.W."/>
            <person name="Bowyer P."/>
            <person name="Chen D."/>
            <person name="Collins M."/>
            <person name="Coulsen R."/>
            <person name="Davies R."/>
            <person name="Dyer P.S."/>
            <person name="Farman M.L."/>
            <person name="Fedorova N."/>
            <person name="Fedorova N.D."/>
            <person name="Feldblyum T.V."/>
            <person name="Fischer R."/>
            <person name="Fosker N."/>
            <person name="Fraser A."/>
            <person name="Garcia J.L."/>
            <person name="Garcia M.J."/>
            <person name="Goble A."/>
            <person name="Goldman G.H."/>
            <person name="Gomi K."/>
            <person name="Griffith-Jones S."/>
            <person name="Gwilliam R."/>
            <person name="Haas B.J."/>
            <person name="Haas H."/>
            <person name="Harris D.E."/>
            <person name="Horiuchi H."/>
            <person name="Huang J."/>
            <person name="Humphray S."/>
            <person name="Jimenez J."/>
            <person name="Keller N."/>
            <person name="Khouri H."/>
            <person name="Kitamoto K."/>
            <person name="Kobayashi T."/>
            <person name="Konzack S."/>
            <person name="Kulkarni R."/>
            <person name="Kumagai T."/>
            <person name="Lafton A."/>
            <person name="Latge J.-P."/>
            <person name="Li W."/>
            <person name="Lord A."/>
            <person name="Lu C."/>
            <person name="Majoros W.H."/>
            <person name="May G.S."/>
            <person name="Miller B.L."/>
            <person name="Mohamoud Y."/>
            <person name="Molina M."/>
            <person name="Monod M."/>
            <person name="Mouyna I."/>
            <person name="Mulligan S."/>
            <person name="Murphy L.D."/>
            <person name="O'Neil S."/>
            <person name="Paulsen I."/>
            <person name="Penalva M.A."/>
            <person name="Pertea M."/>
            <person name="Price C."/>
            <person name="Pritchard B.L."/>
            <person name="Quail M.A."/>
            <person name="Rabbinowitsch E."/>
            <person name="Rawlins N."/>
            <person name="Rajandream M.A."/>
            <person name="Reichard U."/>
            <person name="Renauld H."/>
            <person name="Robson G.D."/>
            <person name="Rodriguez de Cordoba S."/>
            <person name="Rodriguez-Pena J.M."/>
            <person name="Ronning C.M."/>
            <person name="Rutter S."/>
            <person name="Salzberg S.L."/>
            <person name="Sanchez M."/>
            <person name="Sanchez-Ferrero J.C."/>
            <person name="Saunders D."/>
            <person name="Seeger K."/>
            <person name="Squares R."/>
            <person name="Squares S."/>
            <person name="Takeuchi M."/>
            <person name="Tekaia F."/>
            <person name="Turner G."/>
            <person name="Vazquez de Aldana C.R."/>
            <person name="Weidman J."/>
            <person name="White O."/>
            <person name="Woodward J.R."/>
            <person name="Yu J.-H."/>
            <person name="Fraser C.M."/>
            <person name="Galagan J.E."/>
            <person name="Asai K."/>
            <person name="Machida M."/>
            <person name="Hall N."/>
            <person name="Barrell B.G."/>
            <person name="Denning D.W."/>
        </authorList>
    </citation>
    <scope>NUCLEOTIDE SEQUENCE [LARGE SCALE GENOMIC DNA]</scope>
    <source>
        <strain>ATCC MYA-4609 / CBS 101355 / FGSC A1100 / Af293</strain>
    </source>
</reference>
<reference key="2">
    <citation type="journal article" date="2005" name="Appl. Environ. Microbiol.">
        <title>An ergot alkaloid biosynthesis gene and clustered hypothetical genes from Aspergillus fumigatus.</title>
        <authorList>
            <person name="Coyle C.M."/>
            <person name="Panaccione D.G."/>
        </authorList>
    </citation>
    <scope>IDENTIFICATION</scope>
    <scope>FUNCTION</scope>
</reference>
<reference key="3">
    <citation type="journal article" date="2005" name="Microbiology">
        <title>Overproduction, purification and characterization of FgaPT2, a dimethylallyltryptophan synthase from Aspergillus fumigatus.</title>
        <authorList>
            <person name="Unsoeld I.A."/>
            <person name="Li S.-M."/>
        </authorList>
    </citation>
    <scope>FUNCTION</scope>
</reference>
<reference key="4">
    <citation type="journal article" date="2009" name="ChemBioChem">
        <title>Ergot alkaloid biosynthesis in Aspergillus fumigatus: FgaAT catalyses the acetylation of fumigaclavine B.</title>
        <authorList>
            <person name="Liu X."/>
            <person name="Wang L."/>
            <person name="Steffan N."/>
            <person name="Yin W.B."/>
            <person name="Li S.M."/>
        </authorList>
    </citation>
    <scope>FUNCTION</scope>
</reference>
<reference key="5">
    <citation type="journal article" date="2009" name="Eukaryot. Cell">
        <title>Transcriptional profiling identifies a role for BrlA in the response to nitrogen depletion and for StuA in the regulation of secondary metabolite clusters in Aspergillus fumigatus.</title>
        <authorList>
            <person name="Twumasi-Boateng K."/>
            <person name="Yu Y."/>
            <person name="Chen D."/>
            <person name="Gravelat F.N."/>
            <person name="Nierman W.C."/>
            <person name="Sheppard D.C."/>
        </authorList>
    </citation>
    <scope>INDUCTION</scope>
</reference>
<reference key="6">
    <citation type="journal article" date="2009" name="Mol. Plant Pathol.">
        <title>Ergot: from witchcraft to biotechnology.</title>
        <authorList>
            <person name="Haarmann T."/>
            <person name="Rolke Y."/>
            <person name="Giesbert S."/>
            <person name="Tudzynski P."/>
        </authorList>
    </citation>
    <scope>BIOTECHNOLOGY</scope>
</reference>
<reference key="7">
    <citation type="journal article" date="2010" name="Arch. Microbiol.">
        <title>Ergot alkaloid biosynthesis in Aspergillus fumigatus: conversion of chanoclavine-I to chanoclavine-I aldehyde catalyzed by a short-chain alcohol dehydrogenase FgaDH.</title>
        <authorList>
            <person name="Wallwey C."/>
            <person name="Matuschek M."/>
            <person name="Li S.M."/>
        </authorList>
    </citation>
    <scope>FUNCTION</scope>
</reference>
<reference key="8">
    <citation type="journal article" date="2010" name="Org. Biomol. Chem.">
        <title>Ergot alkaloid biosynthesis in Aspergillus fumigatus: Conversion of chanoclavine-I aldehyde to festuclavine by the festuclavine synthase FgaFS in the presence of the old yellow enzyme FgaOx3.</title>
        <authorList>
            <person name="Wallwey C."/>
            <person name="Matuschek M."/>
            <person name="Xie X.L."/>
            <person name="Li S.M."/>
        </authorList>
    </citation>
    <scope>FUNCTION</scope>
</reference>
<reference key="9">
    <citation type="journal article" date="2011" name="Curr. Genet.">
        <title>Ergot cluster-encoded catalase is required for synthesis of chanoclavine-I in Aspergillus fumigatus.</title>
        <authorList>
            <person name="Goetz K.E."/>
            <person name="Coyle C.M."/>
            <person name="Cheng J.Z."/>
            <person name="O'Connor S.E."/>
            <person name="Panaccione D.G."/>
        </authorList>
    </citation>
    <scope>FUNCTION</scope>
</reference>
<reference key="10">
    <citation type="journal article" date="2012" name="Mycologia">
        <title>Chemotypic and genotypic diversity in the ergot alkaloid pathway of Aspergillus fumigatus.</title>
        <authorList>
            <person name="Robinson S.L."/>
            <person name="Panaccione D.G."/>
        </authorList>
    </citation>
    <scope>IDENTIFICATION</scope>
    <scope>NOMENCLATURE</scope>
</reference>
<reference key="11">
    <citation type="journal article" date="2016" name="Curr. Genet.">
        <title>Functional analysis of the gene controlling hydroxylation of festuclavine in the ergot alkaloid pathway of Neosartorya fumigata.</title>
        <authorList>
            <person name="Bilovol Y."/>
            <person name="Panaccione D.G."/>
        </authorList>
    </citation>
    <scope>FUNCTION</scope>
</reference>
<gene>
    <name evidence="14" type="primary">easK</name>
    <name type="ORF">AFUA_2G17980</name>
</gene>
<feature type="signal peptide" evidence="3">
    <location>
        <begin position="1"/>
        <end position="16"/>
    </location>
</feature>
<feature type="chain" id="PRO_0000436408" description="Cytochrome P450 monooxygenase easK">
    <location>
        <begin position="17"/>
        <end position="338"/>
    </location>
</feature>
<feature type="glycosylation site" description="N-linked (GlcNAc...) asparagine" evidence="4">
    <location>
        <position position="240"/>
    </location>
</feature>
<feature type="glycosylation site" description="N-linked (GlcNAc...) asparagine" evidence="4">
    <location>
        <position position="327"/>
    </location>
</feature>
<proteinExistence type="evidence at transcript level"/>
<keyword id="KW-0017">Alkaloid metabolism</keyword>
<keyword id="KW-0325">Glycoprotein</keyword>
<keyword id="KW-0349">Heme</keyword>
<keyword id="KW-0408">Iron</keyword>
<keyword id="KW-0479">Metal-binding</keyword>
<keyword id="KW-0503">Monooxygenase</keyword>
<keyword id="KW-0560">Oxidoreductase</keyword>
<keyword id="KW-1185">Reference proteome</keyword>
<keyword id="KW-0732">Signal</keyword>
<sequence>MLLLTFTLPVVTLLLAHIIRSWFRLRHIPGPFWAKITDLWREHHYIKGDYGDRPMAPYFAIPSLLGMESAMDQIQQELEDQICRRVTIDVVLWMRLFSLESLHWIAFSNKLGYLSEGKDTDGILSILQSKFIGLAGQLCGWIHRTTLRFHFPKSCTGTAVAPSQRKASHRDLLAHFMDASQKNPETLEERGVLGATISTIFAGTDTTGTSLTFFMYYLIKHPAALARLQEELDSAVRSGNLSYPPKWVEVSTLKYLQAVFKETLRLHSTARMSLYRVVGPEGLDLCGERLPSGTNLGCFGYTAHRNEPIYGRDAALFRPERWIEASNDTLLSMERASL</sequence>